<organism>
    <name type="scientific">Shouchella clausii (strain KSM-K16)</name>
    <name type="common">Alkalihalobacillus clausii</name>
    <dbReference type="NCBI Taxonomy" id="66692"/>
    <lineage>
        <taxon>Bacteria</taxon>
        <taxon>Bacillati</taxon>
        <taxon>Bacillota</taxon>
        <taxon>Bacilli</taxon>
        <taxon>Bacillales</taxon>
        <taxon>Bacillaceae</taxon>
        <taxon>Shouchella</taxon>
    </lineage>
</organism>
<feature type="chain" id="PRO_0000203559" description="Anti-sigma F factor">
    <location>
        <begin position="1"/>
        <end position="146"/>
    </location>
</feature>
<gene>
    <name evidence="1" type="primary">spoIIAB</name>
    <name type="ordered locus">ABC1794</name>
</gene>
<protein>
    <recommendedName>
        <fullName evidence="1">Anti-sigma F factor</fullName>
        <ecNumber evidence="1">2.7.11.1</ecNumber>
    </recommendedName>
    <alternativeName>
        <fullName evidence="1">Stage II sporulation protein AB</fullName>
    </alternativeName>
</protein>
<accession>Q5WH26</accession>
<proteinExistence type="inferred from homology"/>
<dbReference type="EC" id="2.7.11.1" evidence="1"/>
<dbReference type="EMBL" id="AP006627">
    <property type="protein sequence ID" value="BAD64329.1"/>
    <property type="molecule type" value="Genomic_DNA"/>
</dbReference>
<dbReference type="RefSeq" id="WP_011246637.1">
    <property type="nucleotide sequence ID" value="NC_006582.1"/>
</dbReference>
<dbReference type="SMR" id="Q5WH26"/>
<dbReference type="STRING" id="66692.ABC1794"/>
<dbReference type="KEGG" id="bcl:ABC1794"/>
<dbReference type="eggNOG" id="COG2172">
    <property type="taxonomic scope" value="Bacteria"/>
</dbReference>
<dbReference type="HOGENOM" id="CLU_090336_11_0_9"/>
<dbReference type="OrthoDB" id="9768808at2"/>
<dbReference type="Proteomes" id="UP000001168">
    <property type="component" value="Chromosome"/>
</dbReference>
<dbReference type="GO" id="GO:0005524">
    <property type="term" value="F:ATP binding"/>
    <property type="evidence" value="ECO:0007669"/>
    <property type="project" value="UniProtKB-KW"/>
</dbReference>
<dbReference type="GO" id="GO:0106310">
    <property type="term" value="F:protein serine kinase activity"/>
    <property type="evidence" value="ECO:0007669"/>
    <property type="project" value="RHEA"/>
</dbReference>
<dbReference type="GO" id="GO:0004674">
    <property type="term" value="F:protein serine/threonine kinase activity"/>
    <property type="evidence" value="ECO:0007669"/>
    <property type="project" value="UniProtKB-KW"/>
</dbReference>
<dbReference type="GO" id="GO:0016989">
    <property type="term" value="F:sigma factor antagonist activity"/>
    <property type="evidence" value="ECO:0007669"/>
    <property type="project" value="InterPro"/>
</dbReference>
<dbReference type="GO" id="GO:0030436">
    <property type="term" value="P:asexual sporulation"/>
    <property type="evidence" value="ECO:0007669"/>
    <property type="project" value="UniProtKB-UniRule"/>
</dbReference>
<dbReference type="GO" id="GO:0042174">
    <property type="term" value="P:negative regulation of sporulation resulting in formation of a cellular spore"/>
    <property type="evidence" value="ECO:0007669"/>
    <property type="project" value="InterPro"/>
</dbReference>
<dbReference type="GO" id="GO:0030435">
    <property type="term" value="P:sporulation resulting in formation of a cellular spore"/>
    <property type="evidence" value="ECO:0007669"/>
    <property type="project" value="UniProtKB-KW"/>
</dbReference>
<dbReference type="Gene3D" id="3.30.565.10">
    <property type="entry name" value="Histidine kinase-like ATPase, C-terminal domain"/>
    <property type="match status" value="1"/>
</dbReference>
<dbReference type="HAMAP" id="MF_00637">
    <property type="entry name" value="Anti_sigma_F"/>
    <property type="match status" value="1"/>
</dbReference>
<dbReference type="InterPro" id="IPR050267">
    <property type="entry name" value="Anti-sigma-factor_SerPK"/>
</dbReference>
<dbReference type="InterPro" id="IPR010194">
    <property type="entry name" value="Anti-sigma_F"/>
</dbReference>
<dbReference type="InterPro" id="IPR036890">
    <property type="entry name" value="HATPase_C_sf"/>
</dbReference>
<dbReference type="NCBIfam" id="TIGR01925">
    <property type="entry name" value="spIIAB"/>
    <property type="match status" value="1"/>
</dbReference>
<dbReference type="PANTHER" id="PTHR35526:SF3">
    <property type="entry name" value="ANTI-SIGMA-F FACTOR RSBW"/>
    <property type="match status" value="1"/>
</dbReference>
<dbReference type="PANTHER" id="PTHR35526">
    <property type="entry name" value="ANTI-SIGMA-F FACTOR RSBW-RELATED"/>
    <property type="match status" value="1"/>
</dbReference>
<dbReference type="Pfam" id="PF13581">
    <property type="entry name" value="HATPase_c_2"/>
    <property type="match status" value="1"/>
</dbReference>
<dbReference type="SMART" id="SM00387">
    <property type="entry name" value="HATPase_c"/>
    <property type="match status" value="1"/>
</dbReference>
<dbReference type="SUPFAM" id="SSF55874">
    <property type="entry name" value="ATPase domain of HSP90 chaperone/DNA topoisomerase II/histidine kinase"/>
    <property type="match status" value="1"/>
</dbReference>
<name>SP2AB_SHOC1</name>
<reference key="1">
    <citation type="submission" date="2003-10" db="EMBL/GenBank/DDBJ databases">
        <title>The complete genome sequence of the alkaliphilic Bacillus clausii KSM-K16.</title>
        <authorList>
            <person name="Takaki Y."/>
            <person name="Kageyama Y."/>
            <person name="Shimamura S."/>
            <person name="Suzuki H."/>
            <person name="Nishi S."/>
            <person name="Hatada Y."/>
            <person name="Kawai S."/>
            <person name="Ito S."/>
            <person name="Horikoshi K."/>
        </authorList>
    </citation>
    <scope>NUCLEOTIDE SEQUENCE [LARGE SCALE GENOMIC DNA]</scope>
    <source>
        <strain>KSM-K16</strain>
    </source>
</reference>
<sequence>MANKMNLAFSALSENESFARVTVSAFIAQLDPTMEELTEIKTIVSEAVTNAIIHGYENDPNGQVYITAELKDRELELIIRDEGVGISDLDEARQPLYTSKPELERSGMGFTIMENFCQELKVISEPMIGTTVYVKKQLTTTKAMCR</sequence>
<comment type="function">
    <text evidence="1">Binds to sigma F and blocks its ability to form an RNA polymerase holoenzyme (E-sigma F). Phosphorylates SpoIIAA on a serine residue. This phosphorylation may enable SpoIIAA to act as an anti-anti-sigma factor that counteracts SpoIIAB and thus releases sigma F from inhibition.</text>
</comment>
<comment type="catalytic activity">
    <reaction evidence="1">
        <text>L-seryl-[protein] + ATP = O-phospho-L-seryl-[protein] + ADP + H(+)</text>
        <dbReference type="Rhea" id="RHEA:17989"/>
        <dbReference type="Rhea" id="RHEA-COMP:9863"/>
        <dbReference type="Rhea" id="RHEA-COMP:11604"/>
        <dbReference type="ChEBI" id="CHEBI:15378"/>
        <dbReference type="ChEBI" id="CHEBI:29999"/>
        <dbReference type="ChEBI" id="CHEBI:30616"/>
        <dbReference type="ChEBI" id="CHEBI:83421"/>
        <dbReference type="ChEBI" id="CHEBI:456216"/>
        <dbReference type="EC" id="2.7.11.1"/>
    </reaction>
</comment>
<comment type="catalytic activity">
    <reaction evidence="1">
        <text>L-threonyl-[protein] + ATP = O-phospho-L-threonyl-[protein] + ADP + H(+)</text>
        <dbReference type="Rhea" id="RHEA:46608"/>
        <dbReference type="Rhea" id="RHEA-COMP:11060"/>
        <dbReference type="Rhea" id="RHEA-COMP:11605"/>
        <dbReference type="ChEBI" id="CHEBI:15378"/>
        <dbReference type="ChEBI" id="CHEBI:30013"/>
        <dbReference type="ChEBI" id="CHEBI:30616"/>
        <dbReference type="ChEBI" id="CHEBI:61977"/>
        <dbReference type="ChEBI" id="CHEBI:456216"/>
        <dbReference type="EC" id="2.7.11.1"/>
    </reaction>
</comment>
<comment type="similarity">
    <text evidence="1">Belongs to the anti-sigma-factor family.</text>
</comment>
<keyword id="KW-0067">ATP-binding</keyword>
<keyword id="KW-0418">Kinase</keyword>
<keyword id="KW-0547">Nucleotide-binding</keyword>
<keyword id="KW-1185">Reference proteome</keyword>
<keyword id="KW-0723">Serine/threonine-protein kinase</keyword>
<keyword id="KW-0749">Sporulation</keyword>
<keyword id="KW-0808">Transferase</keyword>
<evidence type="ECO:0000255" key="1">
    <source>
        <dbReference type="HAMAP-Rule" id="MF_00637"/>
    </source>
</evidence>